<reference key="1">
    <citation type="journal article" date="2007" name="Genome Res.">
        <title>Comparative sequence analyses reveal rapid and divergent evolutionary changes of the WFDC locus in the primate lineage.</title>
        <authorList>
            <consortium name="NISC comparative sequencing program"/>
            <person name="Hurle B."/>
            <person name="Swanson W."/>
            <person name="Green E.D."/>
        </authorList>
    </citation>
    <scope>NUCLEOTIDE SEQUENCE [GENOMIC DNA]</scope>
</reference>
<evidence type="ECO:0000250" key="1"/>
<evidence type="ECO:0000255" key="2"/>
<evidence type="ECO:0000255" key="3">
    <source>
        <dbReference type="PROSITE-ProRule" id="PRU00722"/>
    </source>
</evidence>
<evidence type="ECO:0000256" key="4">
    <source>
        <dbReference type="SAM" id="MobiDB-lite"/>
    </source>
</evidence>
<evidence type="ECO:0000305" key="5"/>
<comment type="function">
    <text evidence="1">Antibacterial protein. Putative acid-stable proteinase inhibitor (By similarity).</text>
</comment>
<comment type="subcellular location">
    <subcellularLocation>
        <location evidence="5">Secreted</location>
    </subcellularLocation>
</comment>
<organism>
    <name type="scientific">Macaca mulatta</name>
    <name type="common">Rhesus macaque</name>
    <dbReference type="NCBI Taxonomy" id="9544"/>
    <lineage>
        <taxon>Eukaryota</taxon>
        <taxon>Metazoa</taxon>
        <taxon>Chordata</taxon>
        <taxon>Craniata</taxon>
        <taxon>Vertebrata</taxon>
        <taxon>Euteleostomi</taxon>
        <taxon>Mammalia</taxon>
        <taxon>Eutheria</taxon>
        <taxon>Euarchontoglires</taxon>
        <taxon>Primates</taxon>
        <taxon>Haplorrhini</taxon>
        <taxon>Catarrhini</taxon>
        <taxon>Cercopithecidae</taxon>
        <taxon>Cercopithecinae</taxon>
        <taxon>Macaca</taxon>
    </lineage>
</organism>
<protein>
    <recommendedName>
        <fullName>WAP four-disulfide core domain protein 12</fullName>
    </recommendedName>
</protein>
<proteinExistence type="inferred from homology"/>
<accession>A4K2T3</accession>
<gene>
    <name type="primary">WFDC12</name>
</gene>
<feature type="signal peptide" evidence="2">
    <location>
        <begin position="1"/>
        <end position="23"/>
    </location>
</feature>
<feature type="chain" id="PRO_0000289651" description="WAP four-disulfide core domain protein 12">
    <location>
        <begin position="24"/>
        <end position="111"/>
    </location>
</feature>
<feature type="domain" description="WAP" evidence="3">
    <location>
        <begin position="27"/>
        <end position="74"/>
    </location>
</feature>
<feature type="region of interest" description="Disordered" evidence="4">
    <location>
        <begin position="80"/>
        <end position="111"/>
    </location>
</feature>
<feature type="compositionally biased region" description="Polar residues" evidence="4">
    <location>
        <begin position="101"/>
        <end position="111"/>
    </location>
</feature>
<feature type="disulfide bond" evidence="3">
    <location>
        <begin position="34"/>
        <end position="62"/>
    </location>
</feature>
<feature type="disulfide bond" evidence="3">
    <location>
        <begin position="41"/>
        <end position="66"/>
    </location>
</feature>
<feature type="disulfide bond" evidence="3">
    <location>
        <begin position="49"/>
        <end position="61"/>
    </location>
</feature>
<feature type="disulfide bond" evidence="3">
    <location>
        <begin position="55"/>
        <end position="70"/>
    </location>
</feature>
<sequence length="111" mass="11660">MGSSSFLVLMVSLALVTLVAAEGVKGGIEKAGVCPADNIRCFKSDPPQCHTDQDCLGERKCCYLHCGFKCVIPVKKLEEGGNKDEDVSGPCPEPGWEAKSPGSSSTGCPQK</sequence>
<name>WFD12_MACMU</name>
<dbReference type="EMBL" id="DP000043">
    <property type="protein sequence ID" value="ABO52968.1"/>
    <property type="molecule type" value="Genomic_DNA"/>
</dbReference>
<dbReference type="RefSeq" id="NP_001162152.1">
    <property type="nucleotide sequence ID" value="NM_001168681.1"/>
</dbReference>
<dbReference type="SMR" id="A4K2T3"/>
<dbReference type="FunCoup" id="A4K2T3">
    <property type="interactions" value="1"/>
</dbReference>
<dbReference type="STRING" id="9544.ENSMMUP00000017364"/>
<dbReference type="MEROPS" id="I17.003"/>
<dbReference type="PaxDb" id="9544-ENSMMUP00000017364"/>
<dbReference type="Ensembl" id="ENSMMUT00000018540.4">
    <property type="protein sequence ID" value="ENSMMUP00000017364.4"/>
    <property type="gene ID" value="ENSMMUG00000013217.4"/>
</dbReference>
<dbReference type="GeneID" id="711552"/>
<dbReference type="KEGG" id="mcc:711552"/>
<dbReference type="CTD" id="128488"/>
<dbReference type="VEuPathDB" id="HostDB:ENSMMUG00000013217"/>
<dbReference type="VGNC" id="VGNC:79009">
    <property type="gene designation" value="WFDC12"/>
</dbReference>
<dbReference type="eggNOG" id="ENOG502TDXW">
    <property type="taxonomic scope" value="Eukaryota"/>
</dbReference>
<dbReference type="GeneTree" id="ENSGT00390000012286"/>
<dbReference type="HOGENOM" id="CLU_172659_0_0_1"/>
<dbReference type="InParanoid" id="A4K2T3"/>
<dbReference type="OMA" id="CIKSDPP"/>
<dbReference type="OrthoDB" id="4473401at2759"/>
<dbReference type="Proteomes" id="UP000006718">
    <property type="component" value="Chromosome 10"/>
</dbReference>
<dbReference type="Bgee" id="ENSMMUG00000013217">
    <property type="expression patterns" value="Expressed in fibroblast and 7 other cell types or tissues"/>
</dbReference>
<dbReference type="GO" id="GO:0005615">
    <property type="term" value="C:extracellular space"/>
    <property type="evidence" value="ECO:0000318"/>
    <property type="project" value="GO_Central"/>
</dbReference>
<dbReference type="GO" id="GO:0004867">
    <property type="term" value="F:serine-type endopeptidase inhibitor activity"/>
    <property type="evidence" value="ECO:0000318"/>
    <property type="project" value="GO_Central"/>
</dbReference>
<dbReference type="GO" id="GO:0019731">
    <property type="term" value="P:antibacterial humoral response"/>
    <property type="evidence" value="ECO:0000318"/>
    <property type="project" value="GO_Central"/>
</dbReference>
<dbReference type="GO" id="GO:0045087">
    <property type="term" value="P:innate immune response"/>
    <property type="evidence" value="ECO:0000318"/>
    <property type="project" value="GO_Central"/>
</dbReference>
<dbReference type="FunFam" id="4.10.75.10:FF:000005">
    <property type="entry name" value="WAP four-disulfide core domain protein 12"/>
    <property type="match status" value="1"/>
</dbReference>
<dbReference type="Gene3D" id="4.10.75.10">
    <property type="entry name" value="Elafin-like"/>
    <property type="match status" value="1"/>
</dbReference>
<dbReference type="InterPro" id="IPR036645">
    <property type="entry name" value="Elafin-like_sf"/>
</dbReference>
<dbReference type="InterPro" id="IPR008197">
    <property type="entry name" value="WAP_dom"/>
</dbReference>
<dbReference type="Pfam" id="PF00095">
    <property type="entry name" value="WAP"/>
    <property type="match status" value="1"/>
</dbReference>
<dbReference type="PRINTS" id="PR00003">
    <property type="entry name" value="4DISULPHCORE"/>
</dbReference>
<dbReference type="SMART" id="SM00217">
    <property type="entry name" value="WAP"/>
    <property type="match status" value="1"/>
</dbReference>
<dbReference type="SUPFAM" id="SSF57256">
    <property type="entry name" value="Elafin-like"/>
    <property type="match status" value="1"/>
</dbReference>
<dbReference type="PROSITE" id="PS51390">
    <property type="entry name" value="WAP"/>
    <property type="match status" value="1"/>
</dbReference>
<keyword id="KW-0044">Antibiotic</keyword>
<keyword id="KW-0929">Antimicrobial</keyword>
<keyword id="KW-1015">Disulfide bond</keyword>
<keyword id="KW-0646">Protease inhibitor</keyword>
<keyword id="KW-1185">Reference proteome</keyword>
<keyword id="KW-0964">Secreted</keyword>
<keyword id="KW-0722">Serine protease inhibitor</keyword>
<keyword id="KW-0732">Signal</keyword>